<keyword id="KW-1185">Reference proteome</keyword>
<sequence length="164" mass="18970">MAYLSDGFEMKSTREYERLGLGFVRFTRGLGRKRILISKRAPENDSPPVKRPSHETTESCRSLLETLHQDILIRVLCHVDHEDLATLKRVSKTIRKAVIEAKKSHFDYSTPKKRLPFRDAILILDSNSNSSSQDDEMEPPNAPIRRRFINRESDLSKISMVLFK</sequence>
<name>FB220_ARATH</name>
<accession>Q9S9T6</accession>
<feature type="chain" id="PRO_0000283489" description="F-box protein At4g05010">
    <location>
        <begin position="1"/>
        <end position="164"/>
    </location>
</feature>
<feature type="domain" description="F-box">
    <location>
        <begin position="61"/>
        <end position="109"/>
    </location>
</feature>
<feature type="region of interest" description="Disordered" evidence="1">
    <location>
        <begin position="38"/>
        <end position="57"/>
    </location>
</feature>
<evidence type="ECO:0000256" key="1">
    <source>
        <dbReference type="SAM" id="MobiDB-lite"/>
    </source>
</evidence>
<dbReference type="EMBL" id="AF162444">
    <property type="protein sequence ID" value="AAD48976.1"/>
    <property type="molecule type" value="Genomic_DNA"/>
</dbReference>
<dbReference type="EMBL" id="AL161502">
    <property type="protein sequence ID" value="CAB81043.1"/>
    <property type="molecule type" value="Genomic_DNA"/>
</dbReference>
<dbReference type="EMBL" id="CP002687">
    <property type="protein sequence ID" value="AEE82458.1"/>
    <property type="molecule type" value="Genomic_DNA"/>
</dbReference>
<dbReference type="PIR" id="A85063">
    <property type="entry name" value="A85063"/>
</dbReference>
<dbReference type="FunCoup" id="Q9S9T6">
    <property type="interactions" value="65"/>
</dbReference>
<dbReference type="STRING" id="3702.Q9S9T6"/>
<dbReference type="PaxDb" id="3702-AT4G05010.1"/>
<dbReference type="EnsemblPlants" id="AT4G05010.1">
    <property type="protein sequence ID" value="AT4G05010.1"/>
    <property type="gene ID" value="AT4G05010"/>
</dbReference>
<dbReference type="Gramene" id="AT4G05010.1">
    <property type="protein sequence ID" value="AT4G05010.1"/>
    <property type="gene ID" value="AT4G05010"/>
</dbReference>
<dbReference type="KEGG" id="ath:AT4G05010"/>
<dbReference type="Araport" id="AT4G05010"/>
<dbReference type="TAIR" id="AT4G05010">
    <property type="gene designation" value="FBS3"/>
</dbReference>
<dbReference type="HOGENOM" id="CLU_113872_0_0_1"/>
<dbReference type="InParanoid" id="Q9S9T6"/>
<dbReference type="OMA" id="CHVDHED"/>
<dbReference type="PhylomeDB" id="Q9S9T6"/>
<dbReference type="PRO" id="PR:Q9S9T6"/>
<dbReference type="Proteomes" id="UP000006548">
    <property type="component" value="Chromosome 4"/>
</dbReference>
<dbReference type="ExpressionAtlas" id="Q9S9T6">
    <property type="expression patterns" value="baseline and differential"/>
</dbReference>
<dbReference type="CDD" id="cd09917">
    <property type="entry name" value="F-box_SF"/>
    <property type="match status" value="1"/>
</dbReference>
<dbReference type="InterPro" id="IPR036047">
    <property type="entry name" value="F-box-like_dom_sf"/>
</dbReference>
<dbReference type="InterPro" id="IPR001810">
    <property type="entry name" value="F-box_dom"/>
</dbReference>
<dbReference type="InterPro" id="IPR045286">
    <property type="entry name" value="FBS1-like"/>
</dbReference>
<dbReference type="PANTHER" id="PTHR34049">
    <property type="entry name" value="F-BOX PROTEIN SKIP27"/>
    <property type="match status" value="1"/>
</dbReference>
<dbReference type="PANTHER" id="PTHR34049:SF8">
    <property type="entry name" value="GENOME ASSEMBLY, CHROMOSOME: A09"/>
    <property type="match status" value="1"/>
</dbReference>
<dbReference type="Pfam" id="PF00646">
    <property type="entry name" value="F-box"/>
    <property type="match status" value="1"/>
</dbReference>
<dbReference type="SUPFAM" id="SSF81383">
    <property type="entry name" value="F-box domain"/>
    <property type="match status" value="1"/>
</dbReference>
<proteinExistence type="evidence at transcript level"/>
<gene>
    <name type="ordered locus">At4g05010</name>
    <name type="ORF">T32N4.5</name>
</gene>
<protein>
    <recommendedName>
        <fullName>F-box protein At4g05010</fullName>
    </recommendedName>
</protein>
<reference key="1">
    <citation type="journal article" date="1999" name="Nature">
        <title>Sequence and analysis of chromosome 4 of the plant Arabidopsis thaliana.</title>
        <authorList>
            <person name="Mayer K.F.X."/>
            <person name="Schueller C."/>
            <person name="Wambutt R."/>
            <person name="Murphy G."/>
            <person name="Volckaert G."/>
            <person name="Pohl T."/>
            <person name="Duesterhoeft A."/>
            <person name="Stiekema W."/>
            <person name="Entian K.-D."/>
            <person name="Terryn N."/>
            <person name="Harris B."/>
            <person name="Ansorge W."/>
            <person name="Brandt P."/>
            <person name="Grivell L.A."/>
            <person name="Rieger M."/>
            <person name="Weichselgartner M."/>
            <person name="de Simone V."/>
            <person name="Obermaier B."/>
            <person name="Mache R."/>
            <person name="Mueller M."/>
            <person name="Kreis M."/>
            <person name="Delseny M."/>
            <person name="Puigdomenech P."/>
            <person name="Watson M."/>
            <person name="Schmidtheini T."/>
            <person name="Reichert B."/>
            <person name="Portetelle D."/>
            <person name="Perez-Alonso M."/>
            <person name="Boutry M."/>
            <person name="Bancroft I."/>
            <person name="Vos P."/>
            <person name="Hoheisel J."/>
            <person name="Zimmermann W."/>
            <person name="Wedler H."/>
            <person name="Ridley P."/>
            <person name="Langham S.-A."/>
            <person name="McCullagh B."/>
            <person name="Bilham L."/>
            <person name="Robben J."/>
            <person name="van der Schueren J."/>
            <person name="Grymonprez B."/>
            <person name="Chuang Y.-J."/>
            <person name="Vandenbussche F."/>
            <person name="Braeken M."/>
            <person name="Weltjens I."/>
            <person name="Voet M."/>
            <person name="Bastiaens I."/>
            <person name="Aert R."/>
            <person name="Defoor E."/>
            <person name="Weitzenegger T."/>
            <person name="Bothe G."/>
            <person name="Ramsperger U."/>
            <person name="Hilbert H."/>
            <person name="Braun M."/>
            <person name="Holzer E."/>
            <person name="Brandt A."/>
            <person name="Peters S."/>
            <person name="van Staveren M."/>
            <person name="Dirkse W."/>
            <person name="Mooijman P."/>
            <person name="Klein Lankhorst R."/>
            <person name="Rose M."/>
            <person name="Hauf J."/>
            <person name="Koetter P."/>
            <person name="Berneiser S."/>
            <person name="Hempel S."/>
            <person name="Feldpausch M."/>
            <person name="Lamberth S."/>
            <person name="Van den Daele H."/>
            <person name="De Keyser A."/>
            <person name="Buysshaert C."/>
            <person name="Gielen J."/>
            <person name="Villarroel R."/>
            <person name="De Clercq R."/>
            <person name="van Montagu M."/>
            <person name="Rogers J."/>
            <person name="Cronin A."/>
            <person name="Quail M.A."/>
            <person name="Bray-Allen S."/>
            <person name="Clark L."/>
            <person name="Doggett J."/>
            <person name="Hall S."/>
            <person name="Kay M."/>
            <person name="Lennard N."/>
            <person name="McLay K."/>
            <person name="Mayes R."/>
            <person name="Pettett A."/>
            <person name="Rajandream M.A."/>
            <person name="Lyne M."/>
            <person name="Benes V."/>
            <person name="Rechmann S."/>
            <person name="Borkova D."/>
            <person name="Bloecker H."/>
            <person name="Scharfe M."/>
            <person name="Grimm M."/>
            <person name="Loehnert T.-H."/>
            <person name="Dose S."/>
            <person name="de Haan M."/>
            <person name="Maarse A.C."/>
            <person name="Schaefer M."/>
            <person name="Mueller-Auer S."/>
            <person name="Gabel C."/>
            <person name="Fuchs M."/>
            <person name="Fartmann B."/>
            <person name="Granderath K."/>
            <person name="Dauner D."/>
            <person name="Herzl A."/>
            <person name="Neumann S."/>
            <person name="Argiriou A."/>
            <person name="Vitale D."/>
            <person name="Liguori R."/>
            <person name="Piravandi E."/>
            <person name="Massenet O."/>
            <person name="Quigley F."/>
            <person name="Clabauld G."/>
            <person name="Muendlein A."/>
            <person name="Felber R."/>
            <person name="Schnabl S."/>
            <person name="Hiller R."/>
            <person name="Schmidt W."/>
            <person name="Lecharny A."/>
            <person name="Aubourg S."/>
            <person name="Chefdor F."/>
            <person name="Cooke R."/>
            <person name="Berger C."/>
            <person name="Monfort A."/>
            <person name="Casacuberta E."/>
            <person name="Gibbons T."/>
            <person name="Weber N."/>
            <person name="Vandenbol M."/>
            <person name="Bargues M."/>
            <person name="Terol J."/>
            <person name="Torres A."/>
            <person name="Perez-Perez A."/>
            <person name="Purnelle B."/>
            <person name="Bent E."/>
            <person name="Johnson S."/>
            <person name="Tacon D."/>
            <person name="Jesse T."/>
            <person name="Heijnen L."/>
            <person name="Schwarz S."/>
            <person name="Scholler P."/>
            <person name="Heber S."/>
            <person name="Francs P."/>
            <person name="Bielke C."/>
            <person name="Frishman D."/>
            <person name="Haase D."/>
            <person name="Lemcke K."/>
            <person name="Mewes H.-W."/>
            <person name="Stocker S."/>
            <person name="Zaccaria P."/>
            <person name="Bevan M."/>
            <person name="Wilson R.K."/>
            <person name="de la Bastide M."/>
            <person name="Habermann K."/>
            <person name="Parnell L."/>
            <person name="Dedhia N."/>
            <person name="Gnoj L."/>
            <person name="Schutz K."/>
            <person name="Huang E."/>
            <person name="Spiegel L."/>
            <person name="Sekhon M."/>
            <person name="Murray J."/>
            <person name="Sheet P."/>
            <person name="Cordes M."/>
            <person name="Abu-Threideh J."/>
            <person name="Stoneking T."/>
            <person name="Kalicki J."/>
            <person name="Graves T."/>
            <person name="Harmon G."/>
            <person name="Edwards J."/>
            <person name="Latreille P."/>
            <person name="Courtney L."/>
            <person name="Cloud J."/>
            <person name="Abbott A."/>
            <person name="Scott K."/>
            <person name="Johnson D."/>
            <person name="Minx P."/>
            <person name="Bentley D."/>
            <person name="Fulton B."/>
            <person name="Miller N."/>
            <person name="Greco T."/>
            <person name="Kemp K."/>
            <person name="Kramer J."/>
            <person name="Fulton L."/>
            <person name="Mardis E."/>
            <person name="Dante M."/>
            <person name="Pepin K."/>
            <person name="Hillier L.W."/>
            <person name="Nelson J."/>
            <person name="Spieth J."/>
            <person name="Ryan E."/>
            <person name="Andrews S."/>
            <person name="Geisel C."/>
            <person name="Layman D."/>
            <person name="Du H."/>
            <person name="Ali J."/>
            <person name="Berghoff A."/>
            <person name="Jones K."/>
            <person name="Drone K."/>
            <person name="Cotton M."/>
            <person name="Joshu C."/>
            <person name="Antonoiu B."/>
            <person name="Zidanic M."/>
            <person name="Strong C."/>
            <person name="Sun H."/>
            <person name="Lamar B."/>
            <person name="Yordan C."/>
            <person name="Ma P."/>
            <person name="Zhong J."/>
            <person name="Preston R."/>
            <person name="Vil D."/>
            <person name="Shekher M."/>
            <person name="Matero A."/>
            <person name="Shah R."/>
            <person name="Swaby I.K."/>
            <person name="O'Shaughnessy A."/>
            <person name="Rodriguez M."/>
            <person name="Hoffman J."/>
            <person name="Till S."/>
            <person name="Granat S."/>
            <person name="Shohdy N."/>
            <person name="Hasegawa A."/>
            <person name="Hameed A."/>
            <person name="Lodhi M."/>
            <person name="Johnson A."/>
            <person name="Chen E."/>
            <person name="Marra M.A."/>
            <person name="Martienssen R."/>
            <person name="McCombie W.R."/>
        </authorList>
    </citation>
    <scope>NUCLEOTIDE SEQUENCE [LARGE SCALE GENOMIC DNA]</scope>
    <source>
        <strain>cv. Columbia</strain>
    </source>
</reference>
<reference key="2">
    <citation type="journal article" date="2017" name="Plant J.">
        <title>Araport11: a complete reannotation of the Arabidopsis thaliana reference genome.</title>
        <authorList>
            <person name="Cheng C.Y."/>
            <person name="Krishnakumar V."/>
            <person name="Chan A.P."/>
            <person name="Thibaud-Nissen F."/>
            <person name="Schobel S."/>
            <person name="Town C.D."/>
        </authorList>
    </citation>
    <scope>GENOME REANNOTATION</scope>
    <source>
        <strain>cv. Columbia</strain>
    </source>
</reference>
<organism>
    <name type="scientific">Arabidopsis thaliana</name>
    <name type="common">Mouse-ear cress</name>
    <dbReference type="NCBI Taxonomy" id="3702"/>
    <lineage>
        <taxon>Eukaryota</taxon>
        <taxon>Viridiplantae</taxon>
        <taxon>Streptophyta</taxon>
        <taxon>Embryophyta</taxon>
        <taxon>Tracheophyta</taxon>
        <taxon>Spermatophyta</taxon>
        <taxon>Magnoliopsida</taxon>
        <taxon>eudicotyledons</taxon>
        <taxon>Gunneridae</taxon>
        <taxon>Pentapetalae</taxon>
        <taxon>rosids</taxon>
        <taxon>malvids</taxon>
        <taxon>Brassicales</taxon>
        <taxon>Brassicaceae</taxon>
        <taxon>Camelineae</taxon>
        <taxon>Arabidopsis</taxon>
    </lineage>
</organism>